<feature type="chain" id="PRO_1000079956" description="Chromosomal replication initiator protein DnaA">
    <location>
        <begin position="1"/>
        <end position="444"/>
    </location>
</feature>
<feature type="region of interest" description="Domain I, interacts with DnaA modulators" evidence="1">
    <location>
        <begin position="1"/>
        <end position="73"/>
    </location>
</feature>
<feature type="region of interest" description="Domain II" evidence="1">
    <location>
        <begin position="73"/>
        <end position="104"/>
    </location>
</feature>
<feature type="region of interest" description="Domain III, AAA+ region" evidence="1">
    <location>
        <begin position="105"/>
        <end position="321"/>
    </location>
</feature>
<feature type="region of interest" description="Domain IV, binds dsDNA" evidence="1">
    <location>
        <begin position="322"/>
        <end position="444"/>
    </location>
</feature>
<feature type="binding site" evidence="1">
    <location>
        <position position="149"/>
    </location>
    <ligand>
        <name>ATP</name>
        <dbReference type="ChEBI" id="CHEBI:30616"/>
    </ligand>
</feature>
<feature type="binding site" evidence="1">
    <location>
        <position position="151"/>
    </location>
    <ligand>
        <name>ATP</name>
        <dbReference type="ChEBI" id="CHEBI:30616"/>
    </ligand>
</feature>
<feature type="binding site" evidence="1">
    <location>
        <position position="152"/>
    </location>
    <ligand>
        <name>ATP</name>
        <dbReference type="ChEBI" id="CHEBI:30616"/>
    </ligand>
</feature>
<feature type="binding site" evidence="1">
    <location>
        <position position="153"/>
    </location>
    <ligand>
        <name>ATP</name>
        <dbReference type="ChEBI" id="CHEBI:30616"/>
    </ligand>
</feature>
<sequence length="444" mass="50646">MDSSAQQLWHNLLERLKLLLTRPAFETWFQTATVKEWQNDRLVIQAANPFILNHLQKNYLSTIAEVVQDIVGYPVEIQLTAQQGDLIAIFQPHTSLESELSPTNQLNPKYNFSRFVVGPTNRMAHAAALAVAELPGREFNPLFLCGGVGLGKTHLMQAIGHYRLELYPQSRVFYVSTEQFTNDLITAIRQDSMESFRNHYRHADILLVDDLQFIEGKEYTQEEFFHTFNTLHEAGKQVVLASDRLPKQIPSLQDRLISRFSMGLVADIQAPDIETRMAILQKKAEYENLRLPREVIEYIAVNYTSNIRELEGALIRATTYISISGLPMTVENIAPVLNPPMAKIATSPEIIMAVVAEKFQLSIADLKGNSRRREISFARQIGMYLMRQHTDLSLPRIGEEFGGKDHTTVIYSCDKINLSQHQDRQLQEILAQLIERINSLSRNQ</sequence>
<keyword id="KW-0067">ATP-binding</keyword>
<keyword id="KW-0963">Cytoplasm</keyword>
<keyword id="KW-0235">DNA replication</keyword>
<keyword id="KW-0238">DNA-binding</keyword>
<keyword id="KW-0446">Lipid-binding</keyword>
<keyword id="KW-0547">Nucleotide-binding</keyword>
<accession>B0JGA6</accession>
<name>DNAA_MICAN</name>
<protein>
    <recommendedName>
        <fullName evidence="1">Chromosomal replication initiator protein DnaA</fullName>
    </recommendedName>
</protein>
<proteinExistence type="inferred from homology"/>
<reference key="1">
    <citation type="journal article" date="2007" name="DNA Res.">
        <title>Complete genomic structure of the bloom-forming toxic cyanobacterium Microcystis aeruginosa NIES-843.</title>
        <authorList>
            <person name="Kaneko T."/>
            <person name="Nakajima N."/>
            <person name="Okamoto S."/>
            <person name="Suzuki I."/>
            <person name="Tanabe Y."/>
            <person name="Tamaoki M."/>
            <person name="Nakamura Y."/>
            <person name="Kasai F."/>
            <person name="Watanabe A."/>
            <person name="Kawashima K."/>
            <person name="Kishida Y."/>
            <person name="Ono A."/>
            <person name="Shimizu Y."/>
            <person name="Takahashi C."/>
            <person name="Minami C."/>
            <person name="Fujishiro T."/>
            <person name="Kohara M."/>
            <person name="Katoh M."/>
            <person name="Nakazaki N."/>
            <person name="Nakayama S."/>
            <person name="Yamada M."/>
            <person name="Tabata S."/>
            <person name="Watanabe M.M."/>
        </authorList>
    </citation>
    <scope>NUCLEOTIDE SEQUENCE [LARGE SCALE GENOMIC DNA]</scope>
    <source>
        <strain>NIES-843 / IAM M-247</strain>
    </source>
</reference>
<dbReference type="EMBL" id="AP009552">
    <property type="protein sequence ID" value="BAG02111.1"/>
    <property type="molecule type" value="Genomic_DNA"/>
</dbReference>
<dbReference type="RefSeq" id="WP_012265465.1">
    <property type="nucleotide sequence ID" value="NC_010296.1"/>
</dbReference>
<dbReference type="SMR" id="B0JGA6"/>
<dbReference type="STRING" id="449447.MAE_22890"/>
<dbReference type="PaxDb" id="449447-MAE_22890"/>
<dbReference type="EnsemblBacteria" id="BAG02111">
    <property type="protein sequence ID" value="BAG02111"/>
    <property type="gene ID" value="MAE_22890"/>
</dbReference>
<dbReference type="KEGG" id="mar:MAE_22890"/>
<dbReference type="PATRIC" id="fig|449447.4.peg.2093"/>
<dbReference type="eggNOG" id="COG0593">
    <property type="taxonomic scope" value="Bacteria"/>
</dbReference>
<dbReference type="HOGENOM" id="CLU_026910_3_1_3"/>
<dbReference type="BioCyc" id="MAER449447:MAE_RS09975-MONOMER"/>
<dbReference type="Proteomes" id="UP000001510">
    <property type="component" value="Chromosome"/>
</dbReference>
<dbReference type="GO" id="GO:0005737">
    <property type="term" value="C:cytoplasm"/>
    <property type="evidence" value="ECO:0007669"/>
    <property type="project" value="UniProtKB-SubCell"/>
</dbReference>
<dbReference type="GO" id="GO:0005886">
    <property type="term" value="C:plasma membrane"/>
    <property type="evidence" value="ECO:0007669"/>
    <property type="project" value="TreeGrafter"/>
</dbReference>
<dbReference type="GO" id="GO:0005524">
    <property type="term" value="F:ATP binding"/>
    <property type="evidence" value="ECO:0007669"/>
    <property type="project" value="UniProtKB-UniRule"/>
</dbReference>
<dbReference type="GO" id="GO:0016887">
    <property type="term" value="F:ATP hydrolysis activity"/>
    <property type="evidence" value="ECO:0007669"/>
    <property type="project" value="InterPro"/>
</dbReference>
<dbReference type="GO" id="GO:0003688">
    <property type="term" value="F:DNA replication origin binding"/>
    <property type="evidence" value="ECO:0007669"/>
    <property type="project" value="UniProtKB-UniRule"/>
</dbReference>
<dbReference type="GO" id="GO:0008289">
    <property type="term" value="F:lipid binding"/>
    <property type="evidence" value="ECO:0007669"/>
    <property type="project" value="UniProtKB-KW"/>
</dbReference>
<dbReference type="GO" id="GO:0006270">
    <property type="term" value="P:DNA replication initiation"/>
    <property type="evidence" value="ECO:0007669"/>
    <property type="project" value="UniProtKB-UniRule"/>
</dbReference>
<dbReference type="GO" id="GO:0006275">
    <property type="term" value="P:regulation of DNA replication"/>
    <property type="evidence" value="ECO:0007669"/>
    <property type="project" value="UniProtKB-UniRule"/>
</dbReference>
<dbReference type="CDD" id="cd00009">
    <property type="entry name" value="AAA"/>
    <property type="match status" value="1"/>
</dbReference>
<dbReference type="CDD" id="cd06571">
    <property type="entry name" value="Bac_DnaA_C"/>
    <property type="match status" value="1"/>
</dbReference>
<dbReference type="FunFam" id="3.40.50.300:FF:000150">
    <property type="entry name" value="Chromosomal replication initiator protein DnaA"/>
    <property type="match status" value="1"/>
</dbReference>
<dbReference type="Gene3D" id="1.10.1750.10">
    <property type="match status" value="1"/>
</dbReference>
<dbReference type="Gene3D" id="1.10.8.60">
    <property type="match status" value="1"/>
</dbReference>
<dbReference type="Gene3D" id="3.30.300.180">
    <property type="match status" value="1"/>
</dbReference>
<dbReference type="Gene3D" id="3.40.50.300">
    <property type="entry name" value="P-loop containing nucleotide triphosphate hydrolases"/>
    <property type="match status" value="1"/>
</dbReference>
<dbReference type="HAMAP" id="MF_00377">
    <property type="entry name" value="DnaA_bact"/>
    <property type="match status" value="1"/>
</dbReference>
<dbReference type="InterPro" id="IPR003593">
    <property type="entry name" value="AAA+_ATPase"/>
</dbReference>
<dbReference type="InterPro" id="IPR001957">
    <property type="entry name" value="Chromosome_initiator_DnaA"/>
</dbReference>
<dbReference type="InterPro" id="IPR020591">
    <property type="entry name" value="Chromosome_initiator_DnaA-like"/>
</dbReference>
<dbReference type="InterPro" id="IPR018312">
    <property type="entry name" value="Chromosome_initiator_DnaA_CS"/>
</dbReference>
<dbReference type="InterPro" id="IPR013159">
    <property type="entry name" value="DnaA_C"/>
</dbReference>
<dbReference type="InterPro" id="IPR013317">
    <property type="entry name" value="DnaA_dom"/>
</dbReference>
<dbReference type="InterPro" id="IPR024633">
    <property type="entry name" value="DnaA_N_dom"/>
</dbReference>
<dbReference type="InterPro" id="IPR038454">
    <property type="entry name" value="DnaA_N_sf"/>
</dbReference>
<dbReference type="InterPro" id="IPR027417">
    <property type="entry name" value="P-loop_NTPase"/>
</dbReference>
<dbReference type="InterPro" id="IPR010921">
    <property type="entry name" value="Trp_repressor/repl_initiator"/>
</dbReference>
<dbReference type="NCBIfam" id="TIGR00362">
    <property type="entry name" value="DnaA"/>
    <property type="match status" value="1"/>
</dbReference>
<dbReference type="PANTHER" id="PTHR30050">
    <property type="entry name" value="CHROMOSOMAL REPLICATION INITIATOR PROTEIN DNAA"/>
    <property type="match status" value="1"/>
</dbReference>
<dbReference type="PANTHER" id="PTHR30050:SF2">
    <property type="entry name" value="CHROMOSOMAL REPLICATION INITIATOR PROTEIN DNAA"/>
    <property type="match status" value="1"/>
</dbReference>
<dbReference type="Pfam" id="PF00308">
    <property type="entry name" value="Bac_DnaA"/>
    <property type="match status" value="1"/>
</dbReference>
<dbReference type="Pfam" id="PF08299">
    <property type="entry name" value="Bac_DnaA_C"/>
    <property type="match status" value="1"/>
</dbReference>
<dbReference type="Pfam" id="PF11638">
    <property type="entry name" value="DnaA_N"/>
    <property type="match status" value="1"/>
</dbReference>
<dbReference type="PRINTS" id="PR00051">
    <property type="entry name" value="DNAA"/>
</dbReference>
<dbReference type="SMART" id="SM00382">
    <property type="entry name" value="AAA"/>
    <property type="match status" value="1"/>
</dbReference>
<dbReference type="SMART" id="SM00760">
    <property type="entry name" value="Bac_DnaA_C"/>
    <property type="match status" value="1"/>
</dbReference>
<dbReference type="SUPFAM" id="SSF52540">
    <property type="entry name" value="P-loop containing nucleoside triphosphate hydrolases"/>
    <property type="match status" value="1"/>
</dbReference>
<dbReference type="SUPFAM" id="SSF48295">
    <property type="entry name" value="TrpR-like"/>
    <property type="match status" value="1"/>
</dbReference>
<dbReference type="PROSITE" id="PS01008">
    <property type="entry name" value="DNAA"/>
    <property type="match status" value="1"/>
</dbReference>
<comment type="function">
    <text evidence="1">Plays an essential role in the initiation and regulation of chromosomal replication. ATP-DnaA binds to the origin of replication (oriC) to initiate formation of the DNA replication initiation complex once per cell cycle. Binds the DnaA box (a 9 base pair repeat at the origin) and separates the double-stranded (ds)DNA. Forms a right-handed helical filament on oriC DNA; dsDNA binds to the exterior of the filament while single-stranded (ss)DNA is stabiized in the filament's interior. The ATP-DnaA-oriC complex binds and stabilizes one strand of the AT-rich DNA unwinding element (DUE), permitting loading of DNA polymerase. After initiation quickly degrades to an ADP-DnaA complex that is not apt for DNA replication. Binds acidic phospholipids.</text>
</comment>
<comment type="subunit">
    <text evidence="1">Oligomerizes as a right-handed, spiral filament on DNA at oriC.</text>
</comment>
<comment type="subcellular location">
    <subcellularLocation>
        <location evidence="1">Cytoplasm</location>
    </subcellularLocation>
</comment>
<comment type="domain">
    <text evidence="1">Domain I is involved in oligomerization and binding regulators, domain II is flexibile and of varying length in different bacteria, domain III forms the AAA+ region, while domain IV binds dsDNA.</text>
</comment>
<comment type="similarity">
    <text evidence="1">Belongs to the DnaA family.</text>
</comment>
<evidence type="ECO:0000255" key="1">
    <source>
        <dbReference type="HAMAP-Rule" id="MF_00377"/>
    </source>
</evidence>
<gene>
    <name evidence="1" type="primary">dnaA</name>
    <name type="ordered locus">MAE_22890</name>
</gene>
<organism>
    <name type="scientific">Microcystis aeruginosa (strain NIES-843 / IAM M-2473)</name>
    <dbReference type="NCBI Taxonomy" id="449447"/>
    <lineage>
        <taxon>Bacteria</taxon>
        <taxon>Bacillati</taxon>
        <taxon>Cyanobacteriota</taxon>
        <taxon>Cyanophyceae</taxon>
        <taxon>Oscillatoriophycideae</taxon>
        <taxon>Chroococcales</taxon>
        <taxon>Microcystaceae</taxon>
        <taxon>Microcystis</taxon>
    </lineage>
</organism>